<evidence type="ECO:0000255" key="1">
    <source>
        <dbReference type="HAMAP-Rule" id="MF_01133"/>
    </source>
</evidence>
<gene>
    <name evidence="1" type="primary">rbcL</name>
    <name type="ordered locus">PF1156</name>
</gene>
<comment type="function">
    <text evidence="1">Catalyzes the addition of molecular CO(2) and H(2)O to ribulose 1,5-bisphosphate (RuBP), generating two molecules of 3-phosphoglycerate (3-PGA). Functions in an archaeal AMP degradation pathway, together with AMP phosphorylase and R15P isomerase.</text>
</comment>
<comment type="catalytic activity">
    <reaction evidence="1">
        <text>2 (2R)-3-phosphoglycerate + 2 H(+) = D-ribulose 1,5-bisphosphate + CO2 + H2O</text>
        <dbReference type="Rhea" id="RHEA:23124"/>
        <dbReference type="ChEBI" id="CHEBI:15377"/>
        <dbReference type="ChEBI" id="CHEBI:15378"/>
        <dbReference type="ChEBI" id="CHEBI:16526"/>
        <dbReference type="ChEBI" id="CHEBI:57870"/>
        <dbReference type="ChEBI" id="CHEBI:58272"/>
        <dbReference type="EC" id="4.1.1.39"/>
    </reaction>
</comment>
<comment type="catalytic activity">
    <reaction evidence="1">
        <text>D-ribulose 1,5-bisphosphate + O2 = 2-phosphoglycolate + (2R)-3-phosphoglycerate + 2 H(+)</text>
        <dbReference type="Rhea" id="RHEA:36631"/>
        <dbReference type="ChEBI" id="CHEBI:15378"/>
        <dbReference type="ChEBI" id="CHEBI:15379"/>
        <dbReference type="ChEBI" id="CHEBI:57870"/>
        <dbReference type="ChEBI" id="CHEBI:58033"/>
        <dbReference type="ChEBI" id="CHEBI:58272"/>
    </reaction>
</comment>
<comment type="cofactor">
    <cofactor evidence="1">
        <name>Mg(2+)</name>
        <dbReference type="ChEBI" id="CHEBI:18420"/>
    </cofactor>
    <text evidence="1">Binds 1 Mg(2+) ion per subunit.</text>
</comment>
<comment type="subunit">
    <text evidence="1">Homodimer or homodecamer. In contrast to form I RuBisCO, the form III RuBisCO is composed solely of large subunits.</text>
</comment>
<comment type="miscellaneous">
    <text evidence="1">Because the Archaea possessing a type III RuBisCO are all anaerobic, it is most likely that only the carboxylase activity of RuBisCO, and not the competitive oxygenase activity (by which RuBP reacts with O(2) to form one molecule of 3-phosphoglycerate and one molecule of 2-phosphoglycolate), is biologically relevant in these strains.</text>
</comment>
<comment type="similarity">
    <text evidence="1">Belongs to the RuBisCO large chain family. Type III subfamily.</text>
</comment>
<name>RBL_PYRFU</name>
<feature type="chain" id="PRO_0000062676" description="Ribulose bisphosphate carboxylase">
    <location>
        <begin position="1"/>
        <end position="420"/>
    </location>
</feature>
<feature type="active site" description="Proton acceptor" evidence="1">
    <location>
        <position position="155"/>
    </location>
</feature>
<feature type="active site" description="Proton acceptor" evidence="1">
    <location>
        <position position="273"/>
    </location>
</feature>
<feature type="binding site" evidence="1">
    <location>
        <position position="157"/>
    </location>
    <ligand>
        <name>substrate</name>
    </ligand>
</feature>
<feature type="binding site" description="via carbamate group" evidence="1">
    <location>
        <position position="181"/>
    </location>
    <ligand>
        <name>Mg(2+)</name>
        <dbReference type="ChEBI" id="CHEBI:18420"/>
    </ligand>
</feature>
<feature type="binding site" evidence="1">
    <location>
        <position position="183"/>
    </location>
    <ligand>
        <name>Mg(2+)</name>
        <dbReference type="ChEBI" id="CHEBI:18420"/>
    </ligand>
</feature>
<feature type="binding site" evidence="1">
    <location>
        <position position="184"/>
    </location>
    <ligand>
        <name>Mg(2+)</name>
        <dbReference type="ChEBI" id="CHEBI:18420"/>
    </ligand>
</feature>
<feature type="binding site" evidence="1">
    <location>
        <position position="274"/>
    </location>
    <ligand>
        <name>substrate</name>
    </ligand>
</feature>
<feature type="binding site" evidence="1">
    <location>
        <position position="306"/>
    </location>
    <ligand>
        <name>substrate</name>
    </ligand>
</feature>
<feature type="binding site" evidence="1">
    <location>
        <begin position="343"/>
        <end position="345"/>
    </location>
    <ligand>
        <name>substrate</name>
    </ligand>
</feature>
<feature type="binding site" evidence="1">
    <location>
        <begin position="365"/>
        <end position="368"/>
    </location>
    <ligand>
        <name>substrate</name>
    </ligand>
</feature>
<feature type="site" description="Transition state stabilizer" evidence="1">
    <location>
        <position position="313"/>
    </location>
</feature>
<feature type="modified residue" description="N6-carboxylysine" evidence="1">
    <location>
        <position position="181"/>
    </location>
</feature>
<organism>
    <name type="scientific">Pyrococcus furiosus (strain ATCC 43587 / DSM 3638 / JCM 8422 / Vc1)</name>
    <dbReference type="NCBI Taxonomy" id="186497"/>
    <lineage>
        <taxon>Archaea</taxon>
        <taxon>Methanobacteriati</taxon>
        <taxon>Methanobacteriota</taxon>
        <taxon>Thermococci</taxon>
        <taxon>Thermococcales</taxon>
        <taxon>Thermococcaceae</taxon>
        <taxon>Pyrococcus</taxon>
    </lineage>
</organism>
<proteinExistence type="inferred from homology"/>
<protein>
    <recommendedName>
        <fullName evidence="1">Ribulose bisphosphate carboxylase</fullName>
        <shortName evidence="1">RuBisCO</shortName>
        <ecNumber evidence="1">4.1.1.39</ecNumber>
    </recommendedName>
</protein>
<reference key="1">
    <citation type="journal article" date="1999" name="Genetics">
        <title>Divergence of the hyperthermophilic archaea Pyrococcus furiosus and P. horikoshii inferred from complete genomic sequences.</title>
        <authorList>
            <person name="Maeder D.L."/>
            <person name="Weiss R.B."/>
            <person name="Dunn D.M."/>
            <person name="Cherry J.L."/>
            <person name="Gonzalez J.M."/>
            <person name="DiRuggiero J."/>
            <person name="Robb F.T."/>
        </authorList>
    </citation>
    <scope>NUCLEOTIDE SEQUENCE [LARGE SCALE GENOMIC DNA]</scope>
    <source>
        <strain>ATCC 43587 / DSM 3638 / JCM 8422 / Vc1</strain>
    </source>
</reference>
<dbReference type="EC" id="4.1.1.39" evidence="1"/>
<dbReference type="EMBL" id="AE009950">
    <property type="protein sequence ID" value="AAL81280.1"/>
    <property type="molecule type" value="Genomic_DNA"/>
</dbReference>
<dbReference type="RefSeq" id="WP_011012296.1">
    <property type="nucleotide sequence ID" value="NZ_CP023154.1"/>
</dbReference>
<dbReference type="SMR" id="Q8U1P9"/>
<dbReference type="STRING" id="186497.PF1156"/>
<dbReference type="PaxDb" id="186497-PF1156"/>
<dbReference type="GeneID" id="41712965"/>
<dbReference type="KEGG" id="pfu:PF1156"/>
<dbReference type="PATRIC" id="fig|186497.12.peg.1217"/>
<dbReference type="eggNOG" id="arCOG04443">
    <property type="taxonomic scope" value="Archaea"/>
</dbReference>
<dbReference type="HOGENOM" id="CLU_031450_3_1_2"/>
<dbReference type="OrthoDB" id="52787at2157"/>
<dbReference type="PhylomeDB" id="Q8U1P9"/>
<dbReference type="Proteomes" id="UP000001013">
    <property type="component" value="Chromosome"/>
</dbReference>
<dbReference type="GO" id="GO:0000287">
    <property type="term" value="F:magnesium ion binding"/>
    <property type="evidence" value="ECO:0007669"/>
    <property type="project" value="UniProtKB-UniRule"/>
</dbReference>
<dbReference type="GO" id="GO:0016491">
    <property type="term" value="F:oxidoreductase activity"/>
    <property type="evidence" value="ECO:0007669"/>
    <property type="project" value="UniProtKB-KW"/>
</dbReference>
<dbReference type="GO" id="GO:0016984">
    <property type="term" value="F:ribulose-bisphosphate carboxylase activity"/>
    <property type="evidence" value="ECO:0007669"/>
    <property type="project" value="UniProtKB-UniRule"/>
</dbReference>
<dbReference type="GO" id="GO:0006196">
    <property type="term" value="P:AMP catabolic process"/>
    <property type="evidence" value="ECO:0007669"/>
    <property type="project" value="UniProtKB-UniRule"/>
</dbReference>
<dbReference type="GO" id="GO:0015977">
    <property type="term" value="P:carbon fixation"/>
    <property type="evidence" value="ECO:0007669"/>
    <property type="project" value="UniProtKB-KW"/>
</dbReference>
<dbReference type="CDD" id="cd08213">
    <property type="entry name" value="RuBisCO_large_III"/>
    <property type="match status" value="1"/>
</dbReference>
<dbReference type="Gene3D" id="3.20.20.110">
    <property type="entry name" value="Ribulose bisphosphate carboxylase, large subunit, C-terminal domain"/>
    <property type="match status" value="1"/>
</dbReference>
<dbReference type="Gene3D" id="3.30.70.150">
    <property type="entry name" value="RuBisCO large subunit, N-terminal domain"/>
    <property type="match status" value="1"/>
</dbReference>
<dbReference type="HAMAP" id="MF_01133">
    <property type="entry name" value="RuBisCO_L_type3"/>
    <property type="match status" value="1"/>
</dbReference>
<dbReference type="InterPro" id="IPR033966">
    <property type="entry name" value="RuBisCO"/>
</dbReference>
<dbReference type="InterPro" id="IPR017712">
    <property type="entry name" value="RuBisCO_III"/>
</dbReference>
<dbReference type="InterPro" id="IPR000685">
    <property type="entry name" value="RuBisCO_lsu_C"/>
</dbReference>
<dbReference type="InterPro" id="IPR036376">
    <property type="entry name" value="RuBisCO_lsu_C_sf"/>
</dbReference>
<dbReference type="InterPro" id="IPR017443">
    <property type="entry name" value="RuBisCO_lsu_fd_N"/>
</dbReference>
<dbReference type="InterPro" id="IPR036422">
    <property type="entry name" value="RuBisCO_lsu_N_sf"/>
</dbReference>
<dbReference type="NCBIfam" id="NF003252">
    <property type="entry name" value="PRK04208.1"/>
    <property type="match status" value="1"/>
</dbReference>
<dbReference type="NCBIfam" id="TIGR03326">
    <property type="entry name" value="rubisco_III"/>
    <property type="match status" value="1"/>
</dbReference>
<dbReference type="PANTHER" id="PTHR42704">
    <property type="entry name" value="RIBULOSE BISPHOSPHATE CARBOXYLASE"/>
    <property type="match status" value="1"/>
</dbReference>
<dbReference type="PANTHER" id="PTHR42704:SF17">
    <property type="entry name" value="RIBULOSE BISPHOSPHATE CARBOXYLASE LARGE CHAIN"/>
    <property type="match status" value="1"/>
</dbReference>
<dbReference type="Pfam" id="PF00016">
    <property type="entry name" value="RuBisCO_large"/>
    <property type="match status" value="1"/>
</dbReference>
<dbReference type="Pfam" id="PF02788">
    <property type="entry name" value="RuBisCO_large_N"/>
    <property type="match status" value="1"/>
</dbReference>
<dbReference type="SFLD" id="SFLDG01052">
    <property type="entry name" value="RuBisCO"/>
    <property type="match status" value="1"/>
</dbReference>
<dbReference type="SFLD" id="SFLDS00014">
    <property type="entry name" value="RuBisCO"/>
    <property type="match status" value="2"/>
</dbReference>
<dbReference type="SFLD" id="SFLDG00301">
    <property type="entry name" value="RuBisCO-like_proteins"/>
    <property type="match status" value="1"/>
</dbReference>
<dbReference type="SUPFAM" id="SSF51649">
    <property type="entry name" value="RuBisCo, C-terminal domain"/>
    <property type="match status" value="1"/>
</dbReference>
<dbReference type="SUPFAM" id="SSF54966">
    <property type="entry name" value="RuBisCO, large subunit, small (N-terminal) domain"/>
    <property type="match status" value="1"/>
</dbReference>
<accession>Q8U1P9</accession>
<sequence>MKVEWYLDFVDLDYTPGRDELIVEYYFEPNGVSPEEAAGRIASESSIGTWTTLWKMPEMAKRSMAKVFYLEKSGEGYIAKIAYPLTLFEEGSIVQLLSAIAGNIFGMKALKNLRLLDFHPPYEYLRHFKGPQYGVKGIREFMGVKERPLTATVPKPKMGWSVDEYAEIAYELWSGGIDLLKDDENFTSFPFNRFEERVKKLYRIRDIVEAETEERKEYLINITGSVDVMEKRAELVANEGGQYVMIDIIVTGWSALQYMREVTEDLGLAIHAHRAMHAAFTRNPKHGITMYAIAKLARMIGVDQIHTGTAVGKMAGDYEEVKRINDFLLSKWEHIREVFPVASGGLHPGLMPELIRLFGKDLVIQAGGGVMGHPDGPRAGAKALRDAIDAALEGVDLEEKAKSSPELKKALDKWGYLKPK</sequence>
<keyword id="KW-0120">Carbon dioxide fixation</keyword>
<keyword id="KW-0456">Lyase</keyword>
<keyword id="KW-0460">Magnesium</keyword>
<keyword id="KW-0479">Metal-binding</keyword>
<keyword id="KW-0560">Oxidoreductase</keyword>
<keyword id="KW-1185">Reference proteome</keyword>